<reference key="1">
    <citation type="journal article" date="2010" name="Genome Biol. Evol.">
        <title>Continuing evolution of Burkholderia mallei through genome reduction and large-scale rearrangements.</title>
        <authorList>
            <person name="Losada L."/>
            <person name="Ronning C.M."/>
            <person name="DeShazer D."/>
            <person name="Woods D."/>
            <person name="Fedorova N."/>
            <person name="Kim H.S."/>
            <person name="Shabalina S.A."/>
            <person name="Pearson T.R."/>
            <person name="Brinkac L."/>
            <person name="Tan P."/>
            <person name="Nandi T."/>
            <person name="Crabtree J."/>
            <person name="Badger J."/>
            <person name="Beckstrom-Sternberg S."/>
            <person name="Saqib M."/>
            <person name="Schutzer S.E."/>
            <person name="Keim P."/>
            <person name="Nierman W.C."/>
        </authorList>
    </citation>
    <scope>NUCLEOTIDE SEQUENCE [LARGE SCALE GENOMIC DNA]</scope>
    <source>
        <strain>1710b</strain>
    </source>
</reference>
<comment type="function">
    <text evidence="1">Aspartyl-tRNA synthetase with relaxed tRNA specificity since it is able to aspartylate not only its cognate tRNA(Asp) but also tRNA(Asn). Reaction proceeds in two steps: L-aspartate is first activated by ATP to form Asp-AMP and then transferred to the acceptor end of tRNA(Asp/Asn).</text>
</comment>
<comment type="catalytic activity">
    <reaction evidence="1">
        <text>tRNA(Asx) + L-aspartate + ATP = L-aspartyl-tRNA(Asx) + AMP + diphosphate</text>
        <dbReference type="Rhea" id="RHEA:18349"/>
        <dbReference type="Rhea" id="RHEA-COMP:9710"/>
        <dbReference type="Rhea" id="RHEA-COMP:9711"/>
        <dbReference type="ChEBI" id="CHEBI:29991"/>
        <dbReference type="ChEBI" id="CHEBI:30616"/>
        <dbReference type="ChEBI" id="CHEBI:33019"/>
        <dbReference type="ChEBI" id="CHEBI:78442"/>
        <dbReference type="ChEBI" id="CHEBI:78516"/>
        <dbReference type="ChEBI" id="CHEBI:456215"/>
        <dbReference type="EC" id="6.1.1.23"/>
    </reaction>
</comment>
<comment type="subunit">
    <text evidence="1">Homodimer.</text>
</comment>
<comment type="subcellular location">
    <subcellularLocation>
        <location evidence="1">Cytoplasm</location>
    </subcellularLocation>
</comment>
<comment type="similarity">
    <text evidence="1">Belongs to the class-II aminoacyl-tRNA synthetase family. Type 1 subfamily.</text>
</comment>
<accession>Q3JVY8</accession>
<gene>
    <name evidence="1" type="primary">aspS</name>
    <name type="ordered locus">BURPS1710b_0852</name>
</gene>
<feature type="chain" id="PRO_0000235513" description="Aspartate--tRNA(Asp/Asn) ligase">
    <location>
        <begin position="1"/>
        <end position="598"/>
    </location>
</feature>
<feature type="region of interest" description="Aspartate" evidence="1">
    <location>
        <begin position="196"/>
        <end position="199"/>
    </location>
</feature>
<feature type="binding site" evidence="1">
    <location>
        <position position="172"/>
    </location>
    <ligand>
        <name>L-aspartate</name>
        <dbReference type="ChEBI" id="CHEBI:29991"/>
    </ligand>
</feature>
<feature type="binding site" evidence="1">
    <location>
        <begin position="218"/>
        <end position="220"/>
    </location>
    <ligand>
        <name>ATP</name>
        <dbReference type="ChEBI" id="CHEBI:30616"/>
    </ligand>
</feature>
<feature type="binding site" evidence="1">
    <location>
        <position position="218"/>
    </location>
    <ligand>
        <name>L-aspartate</name>
        <dbReference type="ChEBI" id="CHEBI:29991"/>
    </ligand>
</feature>
<feature type="binding site" evidence="1">
    <location>
        <position position="227"/>
    </location>
    <ligand>
        <name>ATP</name>
        <dbReference type="ChEBI" id="CHEBI:30616"/>
    </ligand>
</feature>
<feature type="binding site" evidence="1">
    <location>
        <position position="455"/>
    </location>
    <ligand>
        <name>L-aspartate</name>
        <dbReference type="ChEBI" id="CHEBI:29991"/>
    </ligand>
</feature>
<feature type="binding site" evidence="1">
    <location>
        <position position="489"/>
    </location>
    <ligand>
        <name>ATP</name>
        <dbReference type="ChEBI" id="CHEBI:30616"/>
    </ligand>
</feature>
<feature type="binding site" evidence="1">
    <location>
        <position position="496"/>
    </location>
    <ligand>
        <name>L-aspartate</name>
        <dbReference type="ChEBI" id="CHEBI:29991"/>
    </ligand>
</feature>
<feature type="binding site" evidence="1">
    <location>
        <begin position="541"/>
        <end position="544"/>
    </location>
    <ligand>
        <name>ATP</name>
        <dbReference type="ChEBI" id="CHEBI:30616"/>
    </ligand>
</feature>
<feature type="site" description="Important for tRNA non-discrimination" evidence="1">
    <location>
        <position position="30"/>
    </location>
</feature>
<feature type="site" description="Important for tRNA non-discrimination" evidence="1">
    <location>
        <position position="81"/>
    </location>
</feature>
<sequence length="598" mass="67462">MRTEYCGLVTEHLLGQTVSLCGWVHRRRDHGGVIFIDLRDREGLVQVVCDPDRAEMFAAAEGVRNEFCIQVKGLVRGRPEGTINAGLKSGRIEVLCHELNVLNASVTPPFQLDDDNLSETTRLTHRVLDLRRPQMQHNLRLRYRVAIEARKYLDEQGFIDIETPMLTKSTPEGARDYLVPSRVNAGQFFALPQSPQLFKQLLMVANFDRYYQITKCFRDEDLRADRQPEFTQIDCETSFLGEQEIRDLFEDMIRHIFKTTIGVELDATFPVMPYSEAMARFGSDKPDLRVKLEFTELTDAMKDVDFKVFSTPANTKDGRVAALRVPKGGELTRGDIDGYTEFVRIYGAKGLAWIKVNERAKGRDGLQSPIVKNLHDASIAAILERTGAQDGDIIFFAADRAKVVNDSLGALRLKIGHSEFGKANGLVEAGWKPLWVVDFPMFEYDDEEARYVAAHHPFTSPKDEHLEYLETDPGRCLAKAYDMVLNGWEIGGGSVRIHREEVQSKVFRALKIGPEEAQAKFGFLLDALQYGAPPHGGIAFGLDRIVTMMAGADSIRDVIAFPKTQRAQCLLTQAPSPVDERQLRELHIRLRQPEQPKA</sequence>
<proteinExistence type="inferred from homology"/>
<organism>
    <name type="scientific">Burkholderia pseudomallei (strain 1710b)</name>
    <dbReference type="NCBI Taxonomy" id="320372"/>
    <lineage>
        <taxon>Bacteria</taxon>
        <taxon>Pseudomonadati</taxon>
        <taxon>Pseudomonadota</taxon>
        <taxon>Betaproteobacteria</taxon>
        <taxon>Burkholderiales</taxon>
        <taxon>Burkholderiaceae</taxon>
        <taxon>Burkholderia</taxon>
        <taxon>pseudomallei group</taxon>
    </lineage>
</organism>
<keyword id="KW-0030">Aminoacyl-tRNA synthetase</keyword>
<keyword id="KW-0067">ATP-binding</keyword>
<keyword id="KW-0963">Cytoplasm</keyword>
<keyword id="KW-0436">Ligase</keyword>
<keyword id="KW-0547">Nucleotide-binding</keyword>
<keyword id="KW-0648">Protein biosynthesis</keyword>
<dbReference type="EC" id="6.1.1.23" evidence="1"/>
<dbReference type="EMBL" id="CP000124">
    <property type="protein sequence ID" value="ABA50152.1"/>
    <property type="molecule type" value="Genomic_DNA"/>
</dbReference>
<dbReference type="SMR" id="Q3JVY8"/>
<dbReference type="EnsemblBacteria" id="ABA50152">
    <property type="protein sequence ID" value="ABA50152"/>
    <property type="gene ID" value="BURPS1710b_0852"/>
</dbReference>
<dbReference type="KEGG" id="bpm:BURPS1710b_0852"/>
<dbReference type="HOGENOM" id="CLU_014330_3_2_4"/>
<dbReference type="Proteomes" id="UP000002700">
    <property type="component" value="Chromosome I"/>
</dbReference>
<dbReference type="GO" id="GO:0005737">
    <property type="term" value="C:cytoplasm"/>
    <property type="evidence" value="ECO:0007669"/>
    <property type="project" value="UniProtKB-SubCell"/>
</dbReference>
<dbReference type="GO" id="GO:0004815">
    <property type="term" value="F:aspartate-tRNA ligase activity"/>
    <property type="evidence" value="ECO:0007669"/>
    <property type="project" value="UniProtKB-UniRule"/>
</dbReference>
<dbReference type="GO" id="GO:0050560">
    <property type="term" value="F:aspartate-tRNA(Asn) ligase activity"/>
    <property type="evidence" value="ECO:0007669"/>
    <property type="project" value="UniProtKB-EC"/>
</dbReference>
<dbReference type="GO" id="GO:0005524">
    <property type="term" value="F:ATP binding"/>
    <property type="evidence" value="ECO:0007669"/>
    <property type="project" value="UniProtKB-UniRule"/>
</dbReference>
<dbReference type="GO" id="GO:0003676">
    <property type="term" value="F:nucleic acid binding"/>
    <property type="evidence" value="ECO:0007669"/>
    <property type="project" value="InterPro"/>
</dbReference>
<dbReference type="GO" id="GO:0006422">
    <property type="term" value="P:aspartyl-tRNA aminoacylation"/>
    <property type="evidence" value="ECO:0007669"/>
    <property type="project" value="UniProtKB-UniRule"/>
</dbReference>
<dbReference type="CDD" id="cd00777">
    <property type="entry name" value="AspRS_core"/>
    <property type="match status" value="1"/>
</dbReference>
<dbReference type="CDD" id="cd04317">
    <property type="entry name" value="EcAspRS_like_N"/>
    <property type="match status" value="1"/>
</dbReference>
<dbReference type="Gene3D" id="3.30.930.10">
    <property type="entry name" value="Bira Bifunctional Protein, Domain 2"/>
    <property type="match status" value="1"/>
</dbReference>
<dbReference type="Gene3D" id="3.30.1360.30">
    <property type="entry name" value="GAD-like domain"/>
    <property type="match status" value="1"/>
</dbReference>
<dbReference type="Gene3D" id="2.40.50.140">
    <property type="entry name" value="Nucleic acid-binding proteins"/>
    <property type="match status" value="1"/>
</dbReference>
<dbReference type="HAMAP" id="MF_00044">
    <property type="entry name" value="Asp_tRNA_synth_type1"/>
    <property type="match status" value="1"/>
</dbReference>
<dbReference type="InterPro" id="IPR004364">
    <property type="entry name" value="Aa-tRNA-synt_II"/>
</dbReference>
<dbReference type="InterPro" id="IPR006195">
    <property type="entry name" value="aa-tRNA-synth_II"/>
</dbReference>
<dbReference type="InterPro" id="IPR045864">
    <property type="entry name" value="aa-tRNA-synth_II/BPL/LPL"/>
</dbReference>
<dbReference type="InterPro" id="IPR004524">
    <property type="entry name" value="Asp-tRNA-ligase_1"/>
</dbReference>
<dbReference type="InterPro" id="IPR047089">
    <property type="entry name" value="Asp-tRNA-ligase_1_N"/>
</dbReference>
<dbReference type="InterPro" id="IPR002312">
    <property type="entry name" value="Asp/Asn-tRNA-synth_IIb"/>
</dbReference>
<dbReference type="InterPro" id="IPR047090">
    <property type="entry name" value="AspRS_core"/>
</dbReference>
<dbReference type="InterPro" id="IPR004115">
    <property type="entry name" value="GAD-like_sf"/>
</dbReference>
<dbReference type="InterPro" id="IPR029351">
    <property type="entry name" value="GAD_dom"/>
</dbReference>
<dbReference type="InterPro" id="IPR012340">
    <property type="entry name" value="NA-bd_OB-fold"/>
</dbReference>
<dbReference type="InterPro" id="IPR004365">
    <property type="entry name" value="NA-bd_OB_tRNA"/>
</dbReference>
<dbReference type="NCBIfam" id="TIGR00459">
    <property type="entry name" value="aspS_bact"/>
    <property type="match status" value="1"/>
</dbReference>
<dbReference type="NCBIfam" id="NF001750">
    <property type="entry name" value="PRK00476.1"/>
    <property type="match status" value="1"/>
</dbReference>
<dbReference type="PANTHER" id="PTHR22594:SF5">
    <property type="entry name" value="ASPARTATE--TRNA LIGASE, MITOCHONDRIAL"/>
    <property type="match status" value="1"/>
</dbReference>
<dbReference type="PANTHER" id="PTHR22594">
    <property type="entry name" value="ASPARTYL/LYSYL-TRNA SYNTHETASE"/>
    <property type="match status" value="1"/>
</dbReference>
<dbReference type="Pfam" id="PF02938">
    <property type="entry name" value="GAD"/>
    <property type="match status" value="1"/>
</dbReference>
<dbReference type="Pfam" id="PF00152">
    <property type="entry name" value="tRNA-synt_2"/>
    <property type="match status" value="1"/>
</dbReference>
<dbReference type="Pfam" id="PF01336">
    <property type="entry name" value="tRNA_anti-codon"/>
    <property type="match status" value="1"/>
</dbReference>
<dbReference type="PRINTS" id="PR01042">
    <property type="entry name" value="TRNASYNTHASP"/>
</dbReference>
<dbReference type="SUPFAM" id="SSF55681">
    <property type="entry name" value="Class II aaRS and biotin synthetases"/>
    <property type="match status" value="1"/>
</dbReference>
<dbReference type="SUPFAM" id="SSF55261">
    <property type="entry name" value="GAD domain-like"/>
    <property type="match status" value="1"/>
</dbReference>
<dbReference type="SUPFAM" id="SSF50249">
    <property type="entry name" value="Nucleic acid-binding proteins"/>
    <property type="match status" value="1"/>
</dbReference>
<dbReference type="PROSITE" id="PS50862">
    <property type="entry name" value="AA_TRNA_LIGASE_II"/>
    <property type="match status" value="1"/>
</dbReference>
<evidence type="ECO:0000255" key="1">
    <source>
        <dbReference type="HAMAP-Rule" id="MF_00044"/>
    </source>
</evidence>
<protein>
    <recommendedName>
        <fullName evidence="1">Aspartate--tRNA(Asp/Asn) ligase</fullName>
        <ecNumber evidence="1">6.1.1.23</ecNumber>
    </recommendedName>
    <alternativeName>
        <fullName evidence="1">Aspartyl-tRNA synthetase</fullName>
        <shortName evidence="1">AspRS</shortName>
    </alternativeName>
    <alternativeName>
        <fullName evidence="1">Non-discriminating aspartyl-tRNA synthetase</fullName>
        <shortName evidence="1">ND-AspRS</shortName>
    </alternativeName>
</protein>
<name>SYDND_BURP1</name>